<comment type="subunit">
    <text evidence="1">Homodimer and heterodimers.</text>
</comment>
<comment type="subcellular location">
    <subcellularLocation>
        <location evidence="1">Cell membrane</location>
        <topology evidence="1">Multi-pass membrane protein</topology>
    </subcellularLocation>
</comment>
<comment type="similarity">
    <text evidence="3">Belongs to the Casparian strip membrane proteins (CASP) family.</text>
</comment>
<proteinExistence type="evidence at transcript level"/>
<accession>P0DJI7</accession>
<protein>
    <recommendedName>
        <fullName>CASP-like protein 3</fullName>
    </recommendedName>
</protein>
<reference key="1">
    <citation type="submission" date="2010-07" db="EMBL/GenBank/DDBJ databases">
        <title>cDNA library of Osmunda lancea.</title>
        <authorList>
            <person name="Kakugawa-Yatabe Y."/>
            <person name="Tsutsumi C."/>
            <person name="Hirayama Y."/>
            <person name="Kato M."/>
        </authorList>
    </citation>
    <scope>NUCLEOTIDE SEQUENCE [LARGE SCALE MRNA]</scope>
    <source>
        <tissue>Leaf</tissue>
    </source>
</reference>
<name>CSPL3_OSMLA</name>
<keyword id="KW-1003">Cell membrane</keyword>
<keyword id="KW-0472">Membrane</keyword>
<keyword id="KW-0812">Transmembrane</keyword>
<keyword id="KW-1133">Transmembrane helix</keyword>
<organism>
    <name type="scientific">Osmunda lancea</name>
    <name type="common">Fern</name>
    <dbReference type="NCBI Taxonomy" id="90694"/>
    <lineage>
        <taxon>Eukaryota</taxon>
        <taxon>Viridiplantae</taxon>
        <taxon>Streptophyta</taxon>
        <taxon>Embryophyta</taxon>
        <taxon>Tracheophyta</taxon>
        <taxon>Polypodiopsida</taxon>
        <taxon>Polypodiidae</taxon>
        <taxon>Osmundales</taxon>
        <taxon>Osmundaceae</taxon>
        <taxon>Osmunda</taxon>
    </lineage>
</organism>
<dbReference type="EMBL" id="FS994861">
    <property type="status" value="NOT_ANNOTATED_CDS"/>
    <property type="molecule type" value="mRNA"/>
</dbReference>
<dbReference type="SMR" id="P0DJI7"/>
<dbReference type="GO" id="GO:0005886">
    <property type="term" value="C:plasma membrane"/>
    <property type="evidence" value="ECO:0007669"/>
    <property type="project" value="UniProtKB-SubCell"/>
</dbReference>
<dbReference type="InterPro" id="IPR006459">
    <property type="entry name" value="CASP/CASPL"/>
</dbReference>
<dbReference type="InterPro" id="IPR006702">
    <property type="entry name" value="CASP_dom"/>
</dbReference>
<dbReference type="NCBIfam" id="TIGR01569">
    <property type="entry name" value="A_tha_TIGR01569"/>
    <property type="match status" value="1"/>
</dbReference>
<dbReference type="PANTHER" id="PTHR33573:SF50">
    <property type="entry name" value="CASP-LIKE PROTEIN 4A3"/>
    <property type="match status" value="1"/>
</dbReference>
<dbReference type="PANTHER" id="PTHR33573">
    <property type="entry name" value="CASP-LIKE PROTEIN 4A4"/>
    <property type="match status" value="1"/>
</dbReference>
<dbReference type="Pfam" id="PF04535">
    <property type="entry name" value="CASP_dom"/>
    <property type="match status" value="1"/>
</dbReference>
<sequence length="167" mass="18102">MKIIAIAPRIGAAVLSLVAFSVMASTGERRSGAGSTFKVKFSDFQAYNYLIALNVILFVYSTVQLVMLVNSNHNSSFSSPFKWVLGVYICDQLLAFLLFSASSSAATASELSRHGLHNIWPPACATWKLWTFCSKAEAAVAMSFLSSFFIITSSILSGYHLSKVPAV</sequence>
<feature type="chain" id="PRO_0000417791" description="CASP-like protein 3">
    <location>
        <begin position="1"/>
        <end position="167"/>
    </location>
</feature>
<feature type="topological domain" description="Cytoplasmic" evidence="2">
    <location>
        <begin position="1"/>
        <end position="2"/>
    </location>
</feature>
<feature type="transmembrane region" description="Helical" evidence="2">
    <location>
        <begin position="3"/>
        <end position="23"/>
    </location>
</feature>
<feature type="topological domain" description="Extracellular" evidence="2">
    <location>
        <begin position="24"/>
        <end position="48"/>
    </location>
</feature>
<feature type="transmembrane region" description="Helical" evidence="2">
    <location>
        <begin position="49"/>
        <end position="69"/>
    </location>
</feature>
<feature type="topological domain" description="Cytoplasmic" evidence="2">
    <location>
        <begin position="70"/>
        <end position="80"/>
    </location>
</feature>
<feature type="transmembrane region" description="Helical" evidence="2">
    <location>
        <begin position="81"/>
        <end position="101"/>
    </location>
</feature>
<feature type="topological domain" description="Extracellular" evidence="2">
    <location>
        <begin position="102"/>
        <end position="137"/>
    </location>
</feature>
<feature type="transmembrane region" description="Helical" evidence="2">
    <location>
        <begin position="138"/>
        <end position="158"/>
    </location>
</feature>
<feature type="topological domain" description="Cytoplasmic" evidence="2">
    <location>
        <begin position="159"/>
        <end position="167"/>
    </location>
</feature>
<evidence type="ECO:0000250" key="1"/>
<evidence type="ECO:0000255" key="2"/>
<evidence type="ECO:0000305" key="3"/>